<keyword id="KW-1185">Reference proteome</keyword>
<gene>
    <name type="ordered locus">HI_1546</name>
</gene>
<sequence length="140" mass="16579">MNNQTLATQYEMDFSYNPLPFFSDIEDNLKFNKKLDLNLYCIKRPKQTCFIHITNPNMLAWGIESGDMLVVEKNDDLYSGDLVVLEENNEFHVYEFMAHSGNYLFMALDSTTQNINTKRLVKFTYYRHRDQYDSSNETSR</sequence>
<evidence type="ECO:0000305" key="1"/>
<reference key="1">
    <citation type="journal article" date="1995" name="Science">
        <title>Whole-genome random sequencing and assembly of Haemophilus influenzae Rd.</title>
        <authorList>
            <person name="Fleischmann R.D."/>
            <person name="Adams M.D."/>
            <person name="White O."/>
            <person name="Clayton R.A."/>
            <person name="Kirkness E.F."/>
            <person name="Kerlavage A.R."/>
            <person name="Bult C.J."/>
            <person name="Tomb J.-F."/>
            <person name="Dougherty B.A."/>
            <person name="Merrick J.M."/>
            <person name="McKenney K."/>
            <person name="Sutton G.G."/>
            <person name="FitzHugh W."/>
            <person name="Fields C.A."/>
            <person name="Gocayne J.D."/>
            <person name="Scott J.D."/>
            <person name="Shirley R."/>
            <person name="Liu L.-I."/>
            <person name="Glodek A."/>
            <person name="Kelley J.M."/>
            <person name="Weidman J.F."/>
            <person name="Phillips C.A."/>
            <person name="Spriggs T."/>
            <person name="Hedblom E."/>
            <person name="Cotton M.D."/>
            <person name="Utterback T.R."/>
            <person name="Hanna M.C."/>
            <person name="Nguyen D.T."/>
            <person name="Saudek D.M."/>
            <person name="Brandon R.C."/>
            <person name="Fine L.D."/>
            <person name="Fritchman J.L."/>
            <person name="Fuhrmann J.L."/>
            <person name="Geoghagen N.S.M."/>
            <person name="Gnehm C.L."/>
            <person name="McDonald L.A."/>
            <person name="Small K.V."/>
            <person name="Fraser C.M."/>
            <person name="Smith H.O."/>
            <person name="Venter J.C."/>
        </authorList>
    </citation>
    <scope>NUCLEOTIDE SEQUENCE [LARGE SCALE GENOMIC DNA]</scope>
    <source>
        <strain>ATCC 51907 / DSM 11121 / KW20 / Rd</strain>
    </source>
</reference>
<feature type="chain" id="PRO_0000170118" description="Uncharacterized protein HI_1546">
    <location>
        <begin position="1"/>
        <end position="140"/>
    </location>
</feature>
<accession>P44249</accession>
<protein>
    <recommendedName>
        <fullName>Uncharacterized protein HI_1546</fullName>
    </recommendedName>
</protein>
<organism>
    <name type="scientific">Haemophilus influenzae (strain ATCC 51907 / DSM 11121 / KW20 / Rd)</name>
    <dbReference type="NCBI Taxonomy" id="71421"/>
    <lineage>
        <taxon>Bacteria</taxon>
        <taxon>Pseudomonadati</taxon>
        <taxon>Pseudomonadota</taxon>
        <taxon>Gammaproteobacteria</taxon>
        <taxon>Pasteurellales</taxon>
        <taxon>Pasteurellaceae</taxon>
        <taxon>Haemophilus</taxon>
    </lineage>
</organism>
<dbReference type="EMBL" id="L42023">
    <property type="protein sequence ID" value="AAC23196.1"/>
    <property type="molecule type" value="Genomic_DNA"/>
</dbReference>
<dbReference type="PIR" id="G64035">
    <property type="entry name" value="G64035"/>
</dbReference>
<dbReference type="RefSeq" id="NP_439695.1">
    <property type="nucleotide sequence ID" value="NC_000907.1"/>
</dbReference>
<dbReference type="SMR" id="P44249"/>
<dbReference type="STRING" id="71421.HI_1546"/>
<dbReference type="EnsemblBacteria" id="AAC23196">
    <property type="protein sequence ID" value="AAC23196"/>
    <property type="gene ID" value="HI_1546"/>
</dbReference>
<dbReference type="KEGG" id="hin:HI_1546"/>
<dbReference type="PATRIC" id="fig|71421.8.peg.1617"/>
<dbReference type="eggNOG" id="COG2932">
    <property type="taxonomic scope" value="Bacteria"/>
</dbReference>
<dbReference type="HOGENOM" id="CLU_1782744_0_0_6"/>
<dbReference type="OrthoDB" id="9787787at2"/>
<dbReference type="BioCyc" id="HINF71421:G1GJ1-1566-MONOMER"/>
<dbReference type="Proteomes" id="UP000000579">
    <property type="component" value="Chromosome"/>
</dbReference>
<dbReference type="GO" id="GO:0009432">
    <property type="term" value="P:SOS response"/>
    <property type="evidence" value="ECO:0000269"/>
    <property type="project" value="CollecTF"/>
</dbReference>
<dbReference type="Gene3D" id="2.10.109.10">
    <property type="entry name" value="Umud Fragment, subunit A"/>
    <property type="match status" value="1"/>
</dbReference>
<dbReference type="InterPro" id="IPR036286">
    <property type="entry name" value="LexA/Signal_pep-like_sf"/>
</dbReference>
<dbReference type="InterPro" id="IPR015927">
    <property type="entry name" value="Peptidase_S24_S26A/B/C"/>
</dbReference>
<dbReference type="Pfam" id="PF00717">
    <property type="entry name" value="Peptidase_S24"/>
    <property type="match status" value="1"/>
</dbReference>
<dbReference type="SUPFAM" id="SSF51306">
    <property type="entry name" value="LexA/Signal peptidase"/>
    <property type="match status" value="1"/>
</dbReference>
<comment type="similarity">
    <text evidence="1">Belongs to the peptidase S24 family.</text>
</comment>
<proteinExistence type="inferred from homology"/>
<name>Y1546_HAEIN</name>